<comment type="function">
    <text evidence="1">One of two assembly initiator proteins, it binds directly to the 5'-end of the 23S rRNA, where it nucleates assembly of the 50S subunit.</text>
</comment>
<comment type="function">
    <text evidence="1">One of the proteins that surrounds the polypeptide exit tunnel on the outside of the subunit.</text>
</comment>
<comment type="subunit">
    <text evidence="1">Part of the 50S ribosomal subunit.</text>
</comment>
<comment type="similarity">
    <text evidence="1">Belongs to the universal ribosomal protein uL24 family.</text>
</comment>
<gene>
    <name evidence="1" type="primary">rplX</name>
    <name type="ordered locus">Bind_1365</name>
</gene>
<reference key="1">
    <citation type="journal article" date="2010" name="J. Bacteriol.">
        <title>Complete genome sequence of Beijerinckia indica subsp. indica.</title>
        <authorList>
            <person name="Tamas I."/>
            <person name="Dedysh S.N."/>
            <person name="Liesack W."/>
            <person name="Stott M.B."/>
            <person name="Alam M."/>
            <person name="Murrell J.C."/>
            <person name="Dunfield P.F."/>
        </authorList>
    </citation>
    <scope>NUCLEOTIDE SEQUENCE [LARGE SCALE GENOMIC DNA]</scope>
    <source>
        <strain>ATCC 9039 / DSM 1715 / NCIMB 8712</strain>
    </source>
</reference>
<sequence length="105" mass="11483">MAAKIKKGDKVVVLAGRDKGRSGEVLQVLPKEDRALVRGINLVKRHQRQTAKQEAGIYTKEATIHLSNLALADPKDGKATRVGFKILEDGRKVRFAKHSGDVIDG</sequence>
<dbReference type="EMBL" id="CP001016">
    <property type="protein sequence ID" value="ACB95005.1"/>
    <property type="molecule type" value="Genomic_DNA"/>
</dbReference>
<dbReference type="RefSeq" id="WP_012384362.1">
    <property type="nucleotide sequence ID" value="NC_010581.1"/>
</dbReference>
<dbReference type="SMR" id="B2IK73"/>
<dbReference type="STRING" id="395963.Bind_1365"/>
<dbReference type="KEGG" id="bid:Bind_1365"/>
<dbReference type="eggNOG" id="COG0198">
    <property type="taxonomic scope" value="Bacteria"/>
</dbReference>
<dbReference type="HOGENOM" id="CLU_093315_2_2_5"/>
<dbReference type="OrthoDB" id="9807419at2"/>
<dbReference type="Proteomes" id="UP000001695">
    <property type="component" value="Chromosome"/>
</dbReference>
<dbReference type="GO" id="GO:1990904">
    <property type="term" value="C:ribonucleoprotein complex"/>
    <property type="evidence" value="ECO:0007669"/>
    <property type="project" value="UniProtKB-KW"/>
</dbReference>
<dbReference type="GO" id="GO:0005840">
    <property type="term" value="C:ribosome"/>
    <property type="evidence" value="ECO:0007669"/>
    <property type="project" value="UniProtKB-KW"/>
</dbReference>
<dbReference type="GO" id="GO:0019843">
    <property type="term" value="F:rRNA binding"/>
    <property type="evidence" value="ECO:0007669"/>
    <property type="project" value="UniProtKB-UniRule"/>
</dbReference>
<dbReference type="GO" id="GO:0003735">
    <property type="term" value="F:structural constituent of ribosome"/>
    <property type="evidence" value="ECO:0007669"/>
    <property type="project" value="InterPro"/>
</dbReference>
<dbReference type="GO" id="GO:0006412">
    <property type="term" value="P:translation"/>
    <property type="evidence" value="ECO:0007669"/>
    <property type="project" value="UniProtKB-UniRule"/>
</dbReference>
<dbReference type="CDD" id="cd06089">
    <property type="entry name" value="KOW_RPL26"/>
    <property type="match status" value="1"/>
</dbReference>
<dbReference type="FunFam" id="2.30.30.30:FF:000004">
    <property type="entry name" value="50S ribosomal protein L24"/>
    <property type="match status" value="1"/>
</dbReference>
<dbReference type="Gene3D" id="2.30.30.30">
    <property type="match status" value="1"/>
</dbReference>
<dbReference type="HAMAP" id="MF_01326_B">
    <property type="entry name" value="Ribosomal_uL24_B"/>
    <property type="match status" value="1"/>
</dbReference>
<dbReference type="InterPro" id="IPR005824">
    <property type="entry name" value="KOW"/>
</dbReference>
<dbReference type="InterPro" id="IPR014722">
    <property type="entry name" value="Rib_uL2_dom2"/>
</dbReference>
<dbReference type="InterPro" id="IPR003256">
    <property type="entry name" value="Ribosomal_uL24"/>
</dbReference>
<dbReference type="InterPro" id="IPR005825">
    <property type="entry name" value="Ribosomal_uL24_CS"/>
</dbReference>
<dbReference type="InterPro" id="IPR041988">
    <property type="entry name" value="Ribosomal_uL24_KOW"/>
</dbReference>
<dbReference type="InterPro" id="IPR008991">
    <property type="entry name" value="Translation_prot_SH3-like_sf"/>
</dbReference>
<dbReference type="NCBIfam" id="TIGR01079">
    <property type="entry name" value="rplX_bact"/>
    <property type="match status" value="1"/>
</dbReference>
<dbReference type="PANTHER" id="PTHR12903">
    <property type="entry name" value="MITOCHONDRIAL RIBOSOMAL PROTEIN L24"/>
    <property type="match status" value="1"/>
</dbReference>
<dbReference type="Pfam" id="PF00467">
    <property type="entry name" value="KOW"/>
    <property type="match status" value="1"/>
</dbReference>
<dbReference type="Pfam" id="PF17136">
    <property type="entry name" value="ribosomal_L24"/>
    <property type="match status" value="1"/>
</dbReference>
<dbReference type="SMART" id="SM00739">
    <property type="entry name" value="KOW"/>
    <property type="match status" value="1"/>
</dbReference>
<dbReference type="SUPFAM" id="SSF50104">
    <property type="entry name" value="Translation proteins SH3-like domain"/>
    <property type="match status" value="1"/>
</dbReference>
<dbReference type="PROSITE" id="PS01108">
    <property type="entry name" value="RIBOSOMAL_L24"/>
    <property type="match status" value="1"/>
</dbReference>
<organism>
    <name type="scientific">Beijerinckia indica subsp. indica (strain ATCC 9039 / DSM 1715 / NCIMB 8712)</name>
    <dbReference type="NCBI Taxonomy" id="395963"/>
    <lineage>
        <taxon>Bacteria</taxon>
        <taxon>Pseudomonadati</taxon>
        <taxon>Pseudomonadota</taxon>
        <taxon>Alphaproteobacteria</taxon>
        <taxon>Hyphomicrobiales</taxon>
        <taxon>Beijerinckiaceae</taxon>
        <taxon>Beijerinckia</taxon>
    </lineage>
</organism>
<evidence type="ECO:0000255" key="1">
    <source>
        <dbReference type="HAMAP-Rule" id="MF_01326"/>
    </source>
</evidence>
<evidence type="ECO:0000305" key="2"/>
<keyword id="KW-1185">Reference proteome</keyword>
<keyword id="KW-0687">Ribonucleoprotein</keyword>
<keyword id="KW-0689">Ribosomal protein</keyword>
<keyword id="KW-0694">RNA-binding</keyword>
<keyword id="KW-0699">rRNA-binding</keyword>
<protein>
    <recommendedName>
        <fullName evidence="1">Large ribosomal subunit protein uL24</fullName>
    </recommendedName>
    <alternativeName>
        <fullName evidence="2">50S ribosomal protein L24</fullName>
    </alternativeName>
</protein>
<name>RL24_BEII9</name>
<accession>B2IK73</accession>
<proteinExistence type="inferred from homology"/>
<feature type="chain" id="PRO_1000165926" description="Large ribosomal subunit protein uL24">
    <location>
        <begin position="1"/>
        <end position="105"/>
    </location>
</feature>